<accession>Q7V500</accession>
<reference key="1">
    <citation type="journal article" date="2003" name="Nature">
        <title>Genome divergence in two Prochlorococcus ecotypes reflects oceanic niche differentiation.</title>
        <authorList>
            <person name="Rocap G."/>
            <person name="Larimer F.W."/>
            <person name="Lamerdin J.E."/>
            <person name="Malfatti S."/>
            <person name="Chain P."/>
            <person name="Ahlgren N.A."/>
            <person name="Arellano A."/>
            <person name="Coleman M."/>
            <person name="Hauser L."/>
            <person name="Hess W.R."/>
            <person name="Johnson Z.I."/>
            <person name="Land M.L."/>
            <person name="Lindell D."/>
            <person name="Post A.F."/>
            <person name="Regala W."/>
            <person name="Shah M."/>
            <person name="Shaw S.L."/>
            <person name="Steglich C."/>
            <person name="Sullivan M.B."/>
            <person name="Ting C.S."/>
            <person name="Tolonen A."/>
            <person name="Webb E.A."/>
            <person name="Zinser E.R."/>
            <person name="Chisholm S.W."/>
        </authorList>
    </citation>
    <scope>NUCLEOTIDE SEQUENCE [LARGE SCALE GENOMIC DNA]</scope>
    <source>
        <strain>MIT 9313</strain>
    </source>
</reference>
<sequence>MAREKFERNKPHVNIGTIGHVDHGKTTLTAAITSVLAKKGQAKVQDYAEIDGAPEERERGITINTAHVEYETDGRHYAHVDCPGHADYVKNMITGAAQMDGAILVCAATDGPMAQTKEHILLAKQVGVPALVVALNKCDMVDDEEIIELVEMEIRELLSSYDFPGDDIPIVQVSGLKAIEGEAEWEAKIDELMEAVDASIPEPEREIEKPFLMAVEDVFSITGRGTVATGRIERGKVKKGEEIEIVGIRDSRKTTVTGVEMFRKDLDEGLAGDNCGLLLRGIEKEDIERGMVLVKPGSITPHTKFEGQVYVLKKEEGGRHTPFFAGYRPQFYIRTTDVTGQITAFTAEDGSNVEMVMPGDNIKMTGELICPVAIEQGMRFAIREGGRTIGAGVVSKIIE</sequence>
<comment type="function">
    <text evidence="2">GTP hydrolase that promotes the GTP-dependent binding of aminoacyl-tRNA to the A-site of ribosomes during protein biosynthesis.</text>
</comment>
<comment type="catalytic activity">
    <reaction evidence="2">
        <text>GTP + H2O = GDP + phosphate + H(+)</text>
        <dbReference type="Rhea" id="RHEA:19669"/>
        <dbReference type="ChEBI" id="CHEBI:15377"/>
        <dbReference type="ChEBI" id="CHEBI:15378"/>
        <dbReference type="ChEBI" id="CHEBI:37565"/>
        <dbReference type="ChEBI" id="CHEBI:43474"/>
        <dbReference type="ChEBI" id="CHEBI:58189"/>
        <dbReference type="EC" id="3.6.5.3"/>
    </reaction>
    <physiologicalReaction direction="left-to-right" evidence="2">
        <dbReference type="Rhea" id="RHEA:19670"/>
    </physiologicalReaction>
</comment>
<comment type="subunit">
    <text evidence="2">Monomer.</text>
</comment>
<comment type="subcellular location">
    <subcellularLocation>
        <location evidence="2">Cytoplasm</location>
    </subcellularLocation>
</comment>
<comment type="similarity">
    <text evidence="2">Belongs to the TRAFAC class translation factor GTPase superfamily. Classic translation factor GTPase family. EF-Tu/EF-1A subfamily.</text>
</comment>
<dbReference type="EC" id="3.6.5.3" evidence="2"/>
<dbReference type="EMBL" id="BX548175">
    <property type="protein sequence ID" value="CAE21957.1"/>
    <property type="molecule type" value="Genomic_DNA"/>
</dbReference>
<dbReference type="RefSeq" id="WP_011131149.1">
    <property type="nucleotide sequence ID" value="NC_005071.1"/>
</dbReference>
<dbReference type="SMR" id="Q7V500"/>
<dbReference type="KEGG" id="pmt:PMT_1782"/>
<dbReference type="eggNOG" id="COG0050">
    <property type="taxonomic scope" value="Bacteria"/>
</dbReference>
<dbReference type="HOGENOM" id="CLU_007265_0_1_3"/>
<dbReference type="OrthoDB" id="9804504at2"/>
<dbReference type="Proteomes" id="UP000001423">
    <property type="component" value="Chromosome"/>
</dbReference>
<dbReference type="GO" id="GO:0005829">
    <property type="term" value="C:cytosol"/>
    <property type="evidence" value="ECO:0007669"/>
    <property type="project" value="TreeGrafter"/>
</dbReference>
<dbReference type="GO" id="GO:0005525">
    <property type="term" value="F:GTP binding"/>
    <property type="evidence" value="ECO:0007669"/>
    <property type="project" value="UniProtKB-UniRule"/>
</dbReference>
<dbReference type="GO" id="GO:0003924">
    <property type="term" value="F:GTPase activity"/>
    <property type="evidence" value="ECO:0007669"/>
    <property type="project" value="InterPro"/>
</dbReference>
<dbReference type="GO" id="GO:0003746">
    <property type="term" value="F:translation elongation factor activity"/>
    <property type="evidence" value="ECO:0007669"/>
    <property type="project" value="UniProtKB-UniRule"/>
</dbReference>
<dbReference type="CDD" id="cd01884">
    <property type="entry name" value="EF_Tu"/>
    <property type="match status" value="1"/>
</dbReference>
<dbReference type="CDD" id="cd03697">
    <property type="entry name" value="EFTU_II"/>
    <property type="match status" value="1"/>
</dbReference>
<dbReference type="CDD" id="cd03707">
    <property type="entry name" value="EFTU_III"/>
    <property type="match status" value="1"/>
</dbReference>
<dbReference type="FunFam" id="2.40.30.10:FF:000001">
    <property type="entry name" value="Elongation factor Tu"/>
    <property type="match status" value="1"/>
</dbReference>
<dbReference type="FunFam" id="3.40.50.300:FF:000003">
    <property type="entry name" value="Elongation factor Tu"/>
    <property type="match status" value="1"/>
</dbReference>
<dbReference type="Gene3D" id="3.40.50.300">
    <property type="entry name" value="P-loop containing nucleotide triphosphate hydrolases"/>
    <property type="match status" value="1"/>
</dbReference>
<dbReference type="Gene3D" id="2.40.30.10">
    <property type="entry name" value="Translation factors"/>
    <property type="match status" value="2"/>
</dbReference>
<dbReference type="HAMAP" id="MF_00118_B">
    <property type="entry name" value="EF_Tu_B"/>
    <property type="match status" value="1"/>
</dbReference>
<dbReference type="InterPro" id="IPR041709">
    <property type="entry name" value="EF-Tu_GTP-bd"/>
</dbReference>
<dbReference type="InterPro" id="IPR050055">
    <property type="entry name" value="EF-Tu_GTPase"/>
</dbReference>
<dbReference type="InterPro" id="IPR004161">
    <property type="entry name" value="EFTu-like_2"/>
</dbReference>
<dbReference type="InterPro" id="IPR033720">
    <property type="entry name" value="EFTU_2"/>
</dbReference>
<dbReference type="InterPro" id="IPR031157">
    <property type="entry name" value="G_TR_CS"/>
</dbReference>
<dbReference type="InterPro" id="IPR027417">
    <property type="entry name" value="P-loop_NTPase"/>
</dbReference>
<dbReference type="InterPro" id="IPR005225">
    <property type="entry name" value="Small_GTP-bd"/>
</dbReference>
<dbReference type="InterPro" id="IPR000795">
    <property type="entry name" value="T_Tr_GTP-bd_dom"/>
</dbReference>
<dbReference type="InterPro" id="IPR009000">
    <property type="entry name" value="Transl_B-barrel_sf"/>
</dbReference>
<dbReference type="InterPro" id="IPR009001">
    <property type="entry name" value="Transl_elong_EF1A/Init_IF2_C"/>
</dbReference>
<dbReference type="InterPro" id="IPR004541">
    <property type="entry name" value="Transl_elong_EFTu/EF1A_bac/org"/>
</dbReference>
<dbReference type="InterPro" id="IPR004160">
    <property type="entry name" value="Transl_elong_EFTu/EF1A_C"/>
</dbReference>
<dbReference type="NCBIfam" id="TIGR00485">
    <property type="entry name" value="EF-Tu"/>
    <property type="match status" value="1"/>
</dbReference>
<dbReference type="NCBIfam" id="NF000766">
    <property type="entry name" value="PRK00049.1"/>
    <property type="match status" value="1"/>
</dbReference>
<dbReference type="NCBIfam" id="NF009372">
    <property type="entry name" value="PRK12735.1"/>
    <property type="match status" value="1"/>
</dbReference>
<dbReference type="NCBIfam" id="NF009373">
    <property type="entry name" value="PRK12736.1"/>
    <property type="match status" value="1"/>
</dbReference>
<dbReference type="NCBIfam" id="TIGR00231">
    <property type="entry name" value="small_GTP"/>
    <property type="match status" value="1"/>
</dbReference>
<dbReference type="PANTHER" id="PTHR43721:SF22">
    <property type="entry name" value="ELONGATION FACTOR TU, MITOCHONDRIAL"/>
    <property type="match status" value="1"/>
</dbReference>
<dbReference type="PANTHER" id="PTHR43721">
    <property type="entry name" value="ELONGATION FACTOR TU-RELATED"/>
    <property type="match status" value="1"/>
</dbReference>
<dbReference type="Pfam" id="PF00009">
    <property type="entry name" value="GTP_EFTU"/>
    <property type="match status" value="1"/>
</dbReference>
<dbReference type="Pfam" id="PF03144">
    <property type="entry name" value="GTP_EFTU_D2"/>
    <property type="match status" value="1"/>
</dbReference>
<dbReference type="Pfam" id="PF03143">
    <property type="entry name" value="GTP_EFTU_D3"/>
    <property type="match status" value="1"/>
</dbReference>
<dbReference type="PRINTS" id="PR00315">
    <property type="entry name" value="ELONGATNFCT"/>
</dbReference>
<dbReference type="SUPFAM" id="SSF50465">
    <property type="entry name" value="EF-Tu/eEF-1alpha/eIF2-gamma C-terminal domain"/>
    <property type="match status" value="1"/>
</dbReference>
<dbReference type="SUPFAM" id="SSF52540">
    <property type="entry name" value="P-loop containing nucleoside triphosphate hydrolases"/>
    <property type="match status" value="1"/>
</dbReference>
<dbReference type="SUPFAM" id="SSF50447">
    <property type="entry name" value="Translation proteins"/>
    <property type="match status" value="1"/>
</dbReference>
<dbReference type="PROSITE" id="PS00301">
    <property type="entry name" value="G_TR_1"/>
    <property type="match status" value="1"/>
</dbReference>
<dbReference type="PROSITE" id="PS51722">
    <property type="entry name" value="G_TR_2"/>
    <property type="match status" value="1"/>
</dbReference>
<evidence type="ECO:0000250" key="1"/>
<evidence type="ECO:0000255" key="2">
    <source>
        <dbReference type="HAMAP-Rule" id="MF_00118"/>
    </source>
</evidence>
<name>EFTU_PROMM</name>
<feature type="chain" id="PRO_1000015729" description="Elongation factor Tu">
    <location>
        <begin position="1"/>
        <end position="399"/>
    </location>
</feature>
<feature type="domain" description="tr-type G">
    <location>
        <begin position="10"/>
        <end position="204"/>
    </location>
</feature>
<feature type="region of interest" description="G1" evidence="1">
    <location>
        <begin position="19"/>
        <end position="26"/>
    </location>
</feature>
<feature type="region of interest" description="G2" evidence="1">
    <location>
        <begin position="60"/>
        <end position="64"/>
    </location>
</feature>
<feature type="region of interest" description="G3" evidence="1">
    <location>
        <begin position="81"/>
        <end position="84"/>
    </location>
</feature>
<feature type="region of interest" description="G4" evidence="1">
    <location>
        <begin position="136"/>
        <end position="139"/>
    </location>
</feature>
<feature type="region of interest" description="G5" evidence="1">
    <location>
        <begin position="174"/>
        <end position="176"/>
    </location>
</feature>
<feature type="binding site" evidence="2">
    <location>
        <begin position="19"/>
        <end position="26"/>
    </location>
    <ligand>
        <name>GTP</name>
        <dbReference type="ChEBI" id="CHEBI:37565"/>
    </ligand>
</feature>
<feature type="binding site" evidence="2">
    <location>
        <position position="26"/>
    </location>
    <ligand>
        <name>Mg(2+)</name>
        <dbReference type="ChEBI" id="CHEBI:18420"/>
    </ligand>
</feature>
<feature type="binding site" evidence="2">
    <location>
        <begin position="81"/>
        <end position="85"/>
    </location>
    <ligand>
        <name>GTP</name>
        <dbReference type="ChEBI" id="CHEBI:37565"/>
    </ligand>
</feature>
<feature type="binding site" evidence="2">
    <location>
        <begin position="136"/>
        <end position="139"/>
    </location>
    <ligand>
        <name>GTP</name>
        <dbReference type="ChEBI" id="CHEBI:37565"/>
    </ligand>
</feature>
<organism>
    <name type="scientific">Prochlorococcus marinus (strain MIT 9313)</name>
    <dbReference type="NCBI Taxonomy" id="74547"/>
    <lineage>
        <taxon>Bacteria</taxon>
        <taxon>Bacillati</taxon>
        <taxon>Cyanobacteriota</taxon>
        <taxon>Cyanophyceae</taxon>
        <taxon>Synechococcales</taxon>
        <taxon>Prochlorococcaceae</taxon>
        <taxon>Prochlorococcus</taxon>
    </lineage>
</organism>
<protein>
    <recommendedName>
        <fullName evidence="2">Elongation factor Tu</fullName>
        <shortName evidence="2">EF-Tu</shortName>
        <ecNumber evidence="2">3.6.5.3</ecNumber>
    </recommendedName>
</protein>
<keyword id="KW-0963">Cytoplasm</keyword>
<keyword id="KW-0251">Elongation factor</keyword>
<keyword id="KW-0342">GTP-binding</keyword>
<keyword id="KW-0378">Hydrolase</keyword>
<keyword id="KW-0460">Magnesium</keyword>
<keyword id="KW-0479">Metal-binding</keyword>
<keyword id="KW-0547">Nucleotide-binding</keyword>
<keyword id="KW-0648">Protein biosynthesis</keyword>
<keyword id="KW-1185">Reference proteome</keyword>
<proteinExistence type="inferred from homology"/>
<gene>
    <name evidence="2" type="primary">tuf</name>
    <name type="ordered locus">PMT_1782</name>
</gene>